<reference key="1">
    <citation type="journal article" date="2004" name="Genome Res.">
        <title>The status, quality, and expansion of the NIH full-length cDNA project: the Mammalian Gene Collection (MGC).</title>
        <authorList>
            <consortium name="The MGC Project Team"/>
        </authorList>
    </citation>
    <scope>NUCLEOTIDE SEQUENCE [LARGE SCALE MRNA]</scope>
    <source>
        <tissue>Testis</tissue>
    </source>
</reference>
<reference key="2">
    <citation type="journal article" date="2007" name="J. Biol. Chem.">
        <title>MARCH-XI, a novel transmembrane ubiquitin ligase implicated in ubiquitin-dependent protein sorting in developing spermatids.</title>
        <authorList>
            <person name="Morokuma Y."/>
            <person name="Nakamura N."/>
            <person name="Kato A."/>
            <person name="Notoya M."/>
            <person name="Yamamoto Y."/>
            <person name="Sakai Y."/>
            <person name="Fukuda H."/>
            <person name="Yamashina S."/>
            <person name="Hirata Y."/>
            <person name="Hirose S."/>
        </authorList>
    </citation>
    <scope>INTERACTION WITH MARCHF11</scope>
</reference>
<reference key="3">
    <citation type="journal article" date="2012" name="Nat. Commun.">
        <title>Quantitative maps of protein phosphorylation sites across 14 different rat organs and tissues.</title>
        <authorList>
            <person name="Lundby A."/>
            <person name="Secher A."/>
            <person name="Lage K."/>
            <person name="Nordsborg N.B."/>
            <person name="Dmytriyev A."/>
            <person name="Lundby C."/>
            <person name="Olsen J.V."/>
        </authorList>
    </citation>
    <scope>PHOSPHORYLATION [LARGE SCALE ANALYSIS] AT THR-223</scope>
    <scope>IDENTIFICATION BY MASS SPECTROMETRY [LARGE SCALE ANALYSIS]</scope>
</reference>
<organism>
    <name type="scientific">Rattus norvegicus</name>
    <name type="common">Rat</name>
    <dbReference type="NCBI Taxonomy" id="10116"/>
    <lineage>
        <taxon>Eukaryota</taxon>
        <taxon>Metazoa</taxon>
        <taxon>Chordata</taxon>
        <taxon>Craniata</taxon>
        <taxon>Vertebrata</taxon>
        <taxon>Euteleostomi</taxon>
        <taxon>Mammalia</taxon>
        <taxon>Eutheria</taxon>
        <taxon>Euarchontoglires</taxon>
        <taxon>Glires</taxon>
        <taxon>Rodentia</taxon>
        <taxon>Myomorpha</taxon>
        <taxon>Muroidea</taxon>
        <taxon>Muridae</taxon>
        <taxon>Murinae</taxon>
        <taxon>Rattus</taxon>
    </lineage>
</organism>
<gene>
    <name evidence="7" type="primary">Ap1m1</name>
</gene>
<dbReference type="EMBL" id="BC107903">
    <property type="protein sequence ID" value="AAI07904.1"/>
    <property type="molecule type" value="mRNA"/>
</dbReference>
<dbReference type="RefSeq" id="NP_001037704.1">
    <property type="nucleotide sequence ID" value="NM_001044239.2"/>
</dbReference>
<dbReference type="SMR" id="Q32Q06"/>
<dbReference type="BioGRID" id="258420">
    <property type="interactions" value="2"/>
</dbReference>
<dbReference type="FunCoup" id="Q32Q06">
    <property type="interactions" value="3325"/>
</dbReference>
<dbReference type="IntAct" id="Q32Q06">
    <property type="interactions" value="2"/>
</dbReference>
<dbReference type="MINT" id="Q32Q06"/>
<dbReference type="STRING" id="10116.ENSRNOP00000019350"/>
<dbReference type="iPTMnet" id="Q32Q06"/>
<dbReference type="PhosphoSitePlus" id="Q32Q06"/>
<dbReference type="jPOST" id="Q32Q06"/>
<dbReference type="PaxDb" id="10116-ENSRNOP00000019350"/>
<dbReference type="GeneID" id="306332"/>
<dbReference type="KEGG" id="rno:306332"/>
<dbReference type="UCSC" id="RGD:1307653">
    <property type="organism name" value="rat"/>
</dbReference>
<dbReference type="AGR" id="RGD:1307653"/>
<dbReference type="CTD" id="8907"/>
<dbReference type="RGD" id="1307653">
    <property type="gene designation" value="Ap1m1"/>
</dbReference>
<dbReference type="VEuPathDB" id="HostDB:ENSRNOG00000014454"/>
<dbReference type="eggNOG" id="KOG0937">
    <property type="taxonomic scope" value="Eukaryota"/>
</dbReference>
<dbReference type="HOGENOM" id="CLU_026996_0_2_1"/>
<dbReference type="InParanoid" id="Q32Q06"/>
<dbReference type="OrthoDB" id="10259133at2759"/>
<dbReference type="PhylomeDB" id="Q32Q06"/>
<dbReference type="TreeFam" id="TF300393"/>
<dbReference type="Reactome" id="R-RNO-2132295">
    <property type="pathway name" value="MHC class II antigen presentation"/>
</dbReference>
<dbReference type="Reactome" id="R-RNO-432720">
    <property type="pathway name" value="Lysosome Vesicle Biogenesis"/>
</dbReference>
<dbReference type="Reactome" id="R-RNO-432722">
    <property type="pathway name" value="Golgi Associated Vesicle Biogenesis"/>
</dbReference>
<dbReference type="Reactome" id="R-RNO-6798695">
    <property type="pathway name" value="Neutrophil degranulation"/>
</dbReference>
<dbReference type="PRO" id="PR:Q32Q06"/>
<dbReference type="Proteomes" id="UP000002494">
    <property type="component" value="Chromosome 16"/>
</dbReference>
<dbReference type="Bgee" id="ENSRNOG00000014454">
    <property type="expression patterns" value="Expressed in testis and 19 other cell types or tissues"/>
</dbReference>
<dbReference type="GO" id="GO:0030131">
    <property type="term" value="C:clathrin adaptor complex"/>
    <property type="evidence" value="ECO:0007669"/>
    <property type="project" value="InterPro"/>
</dbReference>
<dbReference type="GO" id="GO:0030136">
    <property type="term" value="C:clathrin-coated vesicle"/>
    <property type="evidence" value="ECO:0000318"/>
    <property type="project" value="GO_Central"/>
</dbReference>
<dbReference type="GO" id="GO:0030665">
    <property type="term" value="C:clathrin-coated vesicle membrane"/>
    <property type="evidence" value="ECO:0007669"/>
    <property type="project" value="UniProtKB-SubCell"/>
</dbReference>
<dbReference type="GO" id="GO:0005794">
    <property type="term" value="C:Golgi apparatus"/>
    <property type="evidence" value="ECO:0007669"/>
    <property type="project" value="UniProtKB-SubCell"/>
</dbReference>
<dbReference type="GO" id="GO:0045202">
    <property type="term" value="C:synapse"/>
    <property type="evidence" value="ECO:0000266"/>
    <property type="project" value="RGD"/>
</dbReference>
<dbReference type="GO" id="GO:0035615">
    <property type="term" value="F:clathrin adaptor activity"/>
    <property type="evidence" value="ECO:0000318"/>
    <property type="project" value="GO_Central"/>
</dbReference>
<dbReference type="GO" id="GO:0035646">
    <property type="term" value="P:endosome to melanosome transport"/>
    <property type="evidence" value="ECO:0000266"/>
    <property type="project" value="RGD"/>
</dbReference>
<dbReference type="GO" id="GO:0006886">
    <property type="term" value="P:intracellular protein transport"/>
    <property type="evidence" value="ECO:0007669"/>
    <property type="project" value="InterPro"/>
</dbReference>
<dbReference type="GO" id="GO:0032438">
    <property type="term" value="P:melanosome organization"/>
    <property type="evidence" value="ECO:0000266"/>
    <property type="project" value="RGD"/>
</dbReference>
<dbReference type="GO" id="GO:0016192">
    <property type="term" value="P:vesicle-mediated transport"/>
    <property type="evidence" value="ECO:0000318"/>
    <property type="project" value="GO_Central"/>
</dbReference>
<dbReference type="CDD" id="cd09258">
    <property type="entry name" value="AP-1_Mu1A_Cterm"/>
    <property type="match status" value="1"/>
</dbReference>
<dbReference type="CDD" id="cd14835">
    <property type="entry name" value="AP1_Mu_N"/>
    <property type="match status" value="1"/>
</dbReference>
<dbReference type="FunFam" id="2.60.40.1170:FF:000002">
    <property type="entry name" value="AP-1 complex subunit mu-1 isoform 1"/>
    <property type="match status" value="1"/>
</dbReference>
<dbReference type="FunFam" id="3.30.450.60:FF:000006">
    <property type="entry name" value="AP-1 complex subunit mu-1 isoform 1"/>
    <property type="match status" value="1"/>
</dbReference>
<dbReference type="Gene3D" id="3.30.450.60">
    <property type="match status" value="1"/>
</dbReference>
<dbReference type="Gene3D" id="2.60.40.1170">
    <property type="entry name" value="Mu homology domain, subdomain B"/>
    <property type="match status" value="2"/>
</dbReference>
<dbReference type="InterPro" id="IPR050431">
    <property type="entry name" value="Adaptor_comp_med_subunit"/>
</dbReference>
<dbReference type="InterPro" id="IPR036168">
    <property type="entry name" value="AP2_Mu_C_sf"/>
</dbReference>
<dbReference type="InterPro" id="IPR022775">
    <property type="entry name" value="AP_mu_sigma_su"/>
</dbReference>
<dbReference type="InterPro" id="IPR001392">
    <property type="entry name" value="Clathrin_mu"/>
</dbReference>
<dbReference type="InterPro" id="IPR018240">
    <property type="entry name" value="Clathrin_mu_CS"/>
</dbReference>
<dbReference type="InterPro" id="IPR011012">
    <property type="entry name" value="Longin-like_dom_sf"/>
</dbReference>
<dbReference type="InterPro" id="IPR028565">
    <property type="entry name" value="MHD"/>
</dbReference>
<dbReference type="PANTHER" id="PTHR10529">
    <property type="entry name" value="AP COMPLEX SUBUNIT MU"/>
    <property type="match status" value="1"/>
</dbReference>
<dbReference type="Pfam" id="PF00928">
    <property type="entry name" value="Adap_comp_sub"/>
    <property type="match status" value="1"/>
</dbReference>
<dbReference type="Pfam" id="PF01217">
    <property type="entry name" value="Clat_adaptor_s"/>
    <property type="match status" value="1"/>
</dbReference>
<dbReference type="PIRSF" id="PIRSF005992">
    <property type="entry name" value="Clathrin_mu"/>
    <property type="match status" value="1"/>
</dbReference>
<dbReference type="PRINTS" id="PR00314">
    <property type="entry name" value="CLATHRINADPT"/>
</dbReference>
<dbReference type="SUPFAM" id="SSF49447">
    <property type="entry name" value="Second domain of Mu2 adaptin subunit (ap50) of ap2 adaptor"/>
    <property type="match status" value="1"/>
</dbReference>
<dbReference type="SUPFAM" id="SSF64356">
    <property type="entry name" value="SNARE-like"/>
    <property type="match status" value="1"/>
</dbReference>
<dbReference type="PROSITE" id="PS00990">
    <property type="entry name" value="CLAT_ADAPTOR_M_1"/>
    <property type="match status" value="1"/>
</dbReference>
<dbReference type="PROSITE" id="PS00991">
    <property type="entry name" value="CLAT_ADAPTOR_M_2"/>
    <property type="match status" value="1"/>
</dbReference>
<dbReference type="PROSITE" id="PS51072">
    <property type="entry name" value="MHD"/>
    <property type="match status" value="1"/>
</dbReference>
<keyword id="KW-0007">Acetylation</keyword>
<keyword id="KW-0968">Cytoplasmic vesicle</keyword>
<keyword id="KW-0333">Golgi apparatus</keyword>
<keyword id="KW-0472">Membrane</keyword>
<keyword id="KW-0597">Phosphoprotein</keyword>
<keyword id="KW-0653">Protein transport</keyword>
<keyword id="KW-1185">Reference proteome</keyword>
<keyword id="KW-0813">Transport</keyword>
<name>AP1M1_RAT</name>
<sequence>MSASAVYVLDLKGKVLICRNYRGDVDMSEVEHFMPILMEKEEEGMLSPILAHGGVRFMWIKHNNLYLVATSKKNACVSLVFSFLYKVVQVFSEYFKELEEESIRDNFVIIYELLDELMDFGYPQTTDSKILQEYITQEGHKLETGAPRPPATVTNAVSWRSEGIKYRKNEVFLDVIEAVNLLVSANGNVLRSEIVGSIKMRVFLSGMPELRLGLNDKVLFDNTGRGKSKSVELEDVKFHQCVRLSRFENDRTISFIPPDGEFELMSYRLNTHVKPLIWIESVIEKHSHSRIEYMVKAKSQFKRRSTANNVEIHIPVPNDADSPKFKTTVGSVKWVPENSEIVWSIKSFPGGKEYLMRAHFGLPSVEAEDKEGKPPISVKFEIPYFTTSGIQVRYLKIIEKSGYQALPWVRYITQNGDYQLRTQ</sequence>
<feature type="initiator methionine" description="Removed" evidence="3">
    <location>
        <position position="1"/>
    </location>
</feature>
<feature type="chain" id="PRO_0000240590" description="AP-1 complex subunit mu-1">
    <location>
        <begin position="2"/>
        <end position="423"/>
    </location>
</feature>
<feature type="domain" description="MHD" evidence="5">
    <location>
        <begin position="168"/>
        <end position="421"/>
    </location>
</feature>
<feature type="modified residue" description="N-acetylserine" evidence="3">
    <location>
        <position position="2"/>
    </location>
</feature>
<feature type="modified residue" description="Phosphothreonine" evidence="3">
    <location>
        <position position="152"/>
    </location>
</feature>
<feature type="modified residue" description="Phosphothreonine" evidence="3">
    <location>
        <position position="154"/>
    </location>
</feature>
<feature type="modified residue" description="Phosphothreonine" evidence="8">
    <location>
        <position position="223"/>
    </location>
</feature>
<comment type="function">
    <text evidence="3">Subunit of clathrin-associated adaptor protein complex 1 that plays a role in protein sorting in the trans-Golgi network (TGN) and endosomes. The AP complexes mediate the recruitment of clathrin to membranes and the recognition of sorting signals within the cytosolic tails of transmembrane cargo molecules (By similarity).</text>
</comment>
<comment type="subunit">
    <text evidence="1 6">Adaptor protein complex 1 (AP-1) is a heterotetramer composed of two large adaptins (gamma-type subunit AP1G1 and beta-type subunit AP1B1), a medium adaptin (mu-type subunit AP1M1 or AP1M2) and a small adaptin (sigma-type subunit AP1S1 or AP1S2 or AP1S3) (By similarity). Interacts with MARCHF11.</text>
</comment>
<comment type="subcellular location">
    <subcellularLocation>
        <location evidence="1">Cytoplasmic vesicle</location>
        <location evidence="1">Clathrin-coated vesicle membrane</location>
        <topology evidence="1">Peripheral membrane protein</topology>
        <orientation evidence="1">Cytoplasmic side</orientation>
    </subcellularLocation>
    <subcellularLocation>
        <location evidence="1">Golgi apparatus</location>
    </subcellularLocation>
    <text evidence="1">Component of the coat surrounding the cytoplasmic face of coated vesicles located at the Golgi complex.</text>
</comment>
<comment type="PTM">
    <text evidence="2">Phosphorylation of membrane-bound AP1M1/AP1M2 increases its affinity for sorting signals.</text>
</comment>
<comment type="similarity">
    <text evidence="4">Belongs to the adaptor complexes medium subunit family.</text>
</comment>
<evidence type="ECO:0000250" key="1"/>
<evidence type="ECO:0000250" key="2">
    <source>
        <dbReference type="UniProtKB" id="Q2KJ81"/>
    </source>
</evidence>
<evidence type="ECO:0000250" key="3">
    <source>
        <dbReference type="UniProtKB" id="Q9BXS5"/>
    </source>
</evidence>
<evidence type="ECO:0000255" key="4"/>
<evidence type="ECO:0000255" key="5">
    <source>
        <dbReference type="PROSITE-ProRule" id="PRU00404"/>
    </source>
</evidence>
<evidence type="ECO:0000269" key="6">
    <source>
    </source>
</evidence>
<evidence type="ECO:0000312" key="7">
    <source>
        <dbReference type="RGD" id="1307653"/>
    </source>
</evidence>
<evidence type="ECO:0007744" key="8">
    <source>
    </source>
</evidence>
<protein>
    <recommendedName>
        <fullName>AP-1 complex subunit mu-1</fullName>
    </recommendedName>
    <alternativeName>
        <fullName>AP-mu chain family member mu1A</fullName>
    </alternativeName>
    <alternativeName>
        <fullName>Adaptor protein complex AP-1 subunit mu-1</fullName>
    </alternativeName>
    <alternativeName>
        <fullName>Adaptor-related protein complex 1 subunit mu-1</fullName>
    </alternativeName>
    <alternativeName>
        <fullName>Clathrin assembly protein complex 1 mu-1 medium chain 1</fullName>
    </alternativeName>
    <alternativeName>
        <fullName>Golgi adaptor HA1/AP1 adaptin mu-1 subunit</fullName>
    </alternativeName>
    <alternativeName>
        <fullName>Mu-adaptin 1</fullName>
    </alternativeName>
    <alternativeName>
        <fullName>Mu1A-adaptin</fullName>
    </alternativeName>
</protein>
<proteinExistence type="evidence at protein level"/>
<accession>Q32Q06</accession>